<organism>
    <name type="scientific">Dictyostelium discoideum</name>
    <name type="common">Social amoeba</name>
    <dbReference type="NCBI Taxonomy" id="44689"/>
    <lineage>
        <taxon>Eukaryota</taxon>
        <taxon>Amoebozoa</taxon>
        <taxon>Evosea</taxon>
        <taxon>Eumycetozoa</taxon>
        <taxon>Dictyostelia</taxon>
        <taxon>Dictyosteliales</taxon>
        <taxon>Dictyosteliaceae</taxon>
        <taxon>Dictyostelium</taxon>
    </lineage>
</organism>
<sequence>MSADSKNQKKVLFVCLGNICRSTMAEIVLRGLVHSRGILDDFQIDSAGTSSYHIGDTPDPRTVQSCNQNMGRAISEESLKHFKSIPLHRARQFTDEDFSKFDYIFAMDESNLSNIKKVLKHSTTKDNHIATIKRLGEYHTHKKINVEDPYYGDMSNFNICFNHVHDCLVNFLKEIESLN</sequence>
<dbReference type="EC" id="3.1.3.48"/>
<dbReference type="EC" id="3.1.3.2"/>
<dbReference type="EMBL" id="AAFI02000003">
    <property type="protein sequence ID" value="EAL73195.1"/>
    <property type="molecule type" value="Genomic_DNA"/>
</dbReference>
<dbReference type="RefSeq" id="XP_647072.1">
    <property type="nucleotide sequence ID" value="XM_641980.1"/>
</dbReference>
<dbReference type="SMR" id="Q55GW2"/>
<dbReference type="FunCoup" id="Q55GW2">
    <property type="interactions" value="31"/>
</dbReference>
<dbReference type="STRING" id="44689.Q55GW2"/>
<dbReference type="PaxDb" id="44689-DDB0266663"/>
<dbReference type="EnsemblProtists" id="EAL73195">
    <property type="protein sequence ID" value="EAL73195"/>
    <property type="gene ID" value="DDB_G0267484"/>
</dbReference>
<dbReference type="GeneID" id="8615876"/>
<dbReference type="KEGG" id="ddi:DDB_G0267484"/>
<dbReference type="dictyBase" id="DDB_G0267484">
    <property type="gene designation" value="acp1"/>
</dbReference>
<dbReference type="VEuPathDB" id="AmoebaDB:DDB_G0267484"/>
<dbReference type="eggNOG" id="KOG3217">
    <property type="taxonomic scope" value="Eukaryota"/>
</dbReference>
<dbReference type="HOGENOM" id="CLU_071415_2_2_1"/>
<dbReference type="InParanoid" id="Q55GW2"/>
<dbReference type="OMA" id="VCHGNIC"/>
<dbReference type="PhylomeDB" id="Q55GW2"/>
<dbReference type="PRO" id="PR:Q55GW2"/>
<dbReference type="Proteomes" id="UP000002195">
    <property type="component" value="Chromosome 1"/>
</dbReference>
<dbReference type="GO" id="GO:0005737">
    <property type="term" value="C:cytoplasm"/>
    <property type="evidence" value="ECO:0007669"/>
    <property type="project" value="UniProtKB-SubCell"/>
</dbReference>
<dbReference type="GO" id="GO:0003993">
    <property type="term" value="F:acid phosphatase activity"/>
    <property type="evidence" value="ECO:0000250"/>
    <property type="project" value="dictyBase"/>
</dbReference>
<dbReference type="GO" id="GO:0016791">
    <property type="term" value="F:phosphatase activity"/>
    <property type="evidence" value="ECO:0000250"/>
    <property type="project" value="dictyBase"/>
</dbReference>
<dbReference type="GO" id="GO:0004725">
    <property type="term" value="F:protein tyrosine phosphatase activity"/>
    <property type="evidence" value="ECO:0000318"/>
    <property type="project" value="GO_Central"/>
</dbReference>
<dbReference type="CDD" id="cd16343">
    <property type="entry name" value="LMWPTP"/>
    <property type="match status" value="1"/>
</dbReference>
<dbReference type="FunFam" id="3.40.50.2300:FF:000274">
    <property type="entry name" value="Low molecular weight phosphotyrosine protein phosphatase"/>
    <property type="match status" value="1"/>
</dbReference>
<dbReference type="Gene3D" id="3.40.50.2300">
    <property type="match status" value="1"/>
</dbReference>
<dbReference type="InterPro" id="IPR050438">
    <property type="entry name" value="LMW_PTPase"/>
</dbReference>
<dbReference type="InterPro" id="IPR023485">
    <property type="entry name" value="Ptyr_pPase"/>
</dbReference>
<dbReference type="InterPro" id="IPR036196">
    <property type="entry name" value="Ptyr_pPase_sf"/>
</dbReference>
<dbReference type="InterPro" id="IPR017867">
    <property type="entry name" value="Tyr_phospatase_low_mol_wt"/>
</dbReference>
<dbReference type="PANTHER" id="PTHR11717:SF7">
    <property type="entry name" value="LOW MOLECULAR WEIGHT PHOSPHOTYROSINE PROTEIN PHOSPHATASE"/>
    <property type="match status" value="1"/>
</dbReference>
<dbReference type="PANTHER" id="PTHR11717">
    <property type="entry name" value="LOW MOLECULAR WEIGHT PROTEIN TYROSINE PHOSPHATASE"/>
    <property type="match status" value="1"/>
</dbReference>
<dbReference type="Pfam" id="PF01451">
    <property type="entry name" value="LMWPc"/>
    <property type="match status" value="1"/>
</dbReference>
<dbReference type="PRINTS" id="PR00719">
    <property type="entry name" value="LMWPTPASE"/>
</dbReference>
<dbReference type="SMART" id="SM00226">
    <property type="entry name" value="LMWPc"/>
    <property type="match status" value="1"/>
</dbReference>
<dbReference type="SUPFAM" id="SSF52788">
    <property type="entry name" value="Phosphotyrosine protein phosphatases I"/>
    <property type="match status" value="1"/>
</dbReference>
<accession>Q55GW2</accession>
<keyword id="KW-0963">Cytoplasm</keyword>
<keyword id="KW-0378">Hydrolase</keyword>
<keyword id="KW-0904">Protein phosphatase</keyword>
<keyword id="KW-1185">Reference proteome</keyword>
<gene>
    <name type="primary">acp1</name>
    <name type="ORF">DDB_G0267484</name>
</gene>
<evidence type="ECO:0000250" key="1"/>
<evidence type="ECO:0000250" key="2">
    <source>
        <dbReference type="UniProtKB" id="P11064"/>
    </source>
</evidence>
<evidence type="ECO:0000305" key="3"/>
<reference key="1">
    <citation type="journal article" date="2005" name="Nature">
        <title>The genome of the social amoeba Dictyostelium discoideum.</title>
        <authorList>
            <person name="Eichinger L."/>
            <person name="Pachebat J.A."/>
            <person name="Gloeckner G."/>
            <person name="Rajandream M.A."/>
            <person name="Sucgang R."/>
            <person name="Berriman M."/>
            <person name="Song J."/>
            <person name="Olsen R."/>
            <person name="Szafranski K."/>
            <person name="Xu Q."/>
            <person name="Tunggal B."/>
            <person name="Kummerfeld S."/>
            <person name="Madera M."/>
            <person name="Konfortov B.A."/>
            <person name="Rivero F."/>
            <person name="Bankier A.T."/>
            <person name="Lehmann R."/>
            <person name="Hamlin N."/>
            <person name="Davies R."/>
            <person name="Gaudet P."/>
            <person name="Fey P."/>
            <person name="Pilcher K."/>
            <person name="Chen G."/>
            <person name="Saunders D."/>
            <person name="Sodergren E.J."/>
            <person name="Davis P."/>
            <person name="Kerhornou A."/>
            <person name="Nie X."/>
            <person name="Hall N."/>
            <person name="Anjard C."/>
            <person name="Hemphill L."/>
            <person name="Bason N."/>
            <person name="Farbrother P."/>
            <person name="Desany B."/>
            <person name="Just E."/>
            <person name="Morio T."/>
            <person name="Rost R."/>
            <person name="Churcher C.M."/>
            <person name="Cooper J."/>
            <person name="Haydock S."/>
            <person name="van Driessche N."/>
            <person name="Cronin A."/>
            <person name="Goodhead I."/>
            <person name="Muzny D.M."/>
            <person name="Mourier T."/>
            <person name="Pain A."/>
            <person name="Lu M."/>
            <person name="Harper D."/>
            <person name="Lindsay R."/>
            <person name="Hauser H."/>
            <person name="James K.D."/>
            <person name="Quiles M."/>
            <person name="Madan Babu M."/>
            <person name="Saito T."/>
            <person name="Buchrieser C."/>
            <person name="Wardroper A."/>
            <person name="Felder M."/>
            <person name="Thangavelu M."/>
            <person name="Johnson D."/>
            <person name="Knights A."/>
            <person name="Loulseged H."/>
            <person name="Mungall K.L."/>
            <person name="Oliver K."/>
            <person name="Price C."/>
            <person name="Quail M.A."/>
            <person name="Urushihara H."/>
            <person name="Hernandez J."/>
            <person name="Rabbinowitsch E."/>
            <person name="Steffen D."/>
            <person name="Sanders M."/>
            <person name="Ma J."/>
            <person name="Kohara Y."/>
            <person name="Sharp S."/>
            <person name="Simmonds M.N."/>
            <person name="Spiegler S."/>
            <person name="Tivey A."/>
            <person name="Sugano S."/>
            <person name="White B."/>
            <person name="Walker D."/>
            <person name="Woodward J.R."/>
            <person name="Winckler T."/>
            <person name="Tanaka Y."/>
            <person name="Shaulsky G."/>
            <person name="Schleicher M."/>
            <person name="Weinstock G.M."/>
            <person name="Rosenthal A."/>
            <person name="Cox E.C."/>
            <person name="Chisholm R.L."/>
            <person name="Gibbs R.A."/>
            <person name="Loomis W.F."/>
            <person name="Platzer M."/>
            <person name="Kay R.R."/>
            <person name="Williams J.G."/>
            <person name="Dear P.H."/>
            <person name="Noegel A.A."/>
            <person name="Barrell B.G."/>
            <person name="Kuspa A."/>
        </authorList>
    </citation>
    <scope>NUCLEOTIDE SEQUENCE [LARGE SCALE GENOMIC DNA]</scope>
    <source>
        <strain>AX4</strain>
    </source>
</reference>
<comment type="function">
    <text evidence="1">Acts on tyrosine phosphorylated proteins, low-MW aryl phosphates and natural and synthetic acyl phosphates.</text>
</comment>
<comment type="catalytic activity">
    <reaction>
        <text>O-phospho-L-tyrosyl-[protein] + H2O = L-tyrosyl-[protein] + phosphate</text>
        <dbReference type="Rhea" id="RHEA:10684"/>
        <dbReference type="Rhea" id="RHEA-COMP:10136"/>
        <dbReference type="Rhea" id="RHEA-COMP:20101"/>
        <dbReference type="ChEBI" id="CHEBI:15377"/>
        <dbReference type="ChEBI" id="CHEBI:43474"/>
        <dbReference type="ChEBI" id="CHEBI:46858"/>
        <dbReference type="ChEBI" id="CHEBI:61978"/>
        <dbReference type="EC" id="3.1.3.48"/>
    </reaction>
</comment>
<comment type="catalytic activity">
    <reaction>
        <text>a phosphate monoester + H2O = an alcohol + phosphate</text>
        <dbReference type="Rhea" id="RHEA:15017"/>
        <dbReference type="ChEBI" id="CHEBI:15377"/>
        <dbReference type="ChEBI" id="CHEBI:30879"/>
        <dbReference type="ChEBI" id="CHEBI:43474"/>
        <dbReference type="ChEBI" id="CHEBI:67140"/>
        <dbReference type="EC" id="3.1.3.2"/>
    </reaction>
</comment>
<comment type="subcellular location">
    <subcellularLocation>
        <location evidence="1">Cytoplasm</location>
    </subcellularLocation>
</comment>
<comment type="similarity">
    <text evidence="3">Belongs to the low molecular weight phosphotyrosine protein phosphatase family.</text>
</comment>
<proteinExistence type="inferred from homology"/>
<protein>
    <recommendedName>
        <fullName>Low molecular weight phosphotyrosine protein phosphatase</fullName>
        <shortName>LMW-PTP</shortName>
        <shortName>LMW-PTPase</shortName>
        <ecNumber>3.1.3.48</ecNumber>
    </recommendedName>
    <alternativeName>
        <fullName>Low molecular weight cytosolic acid phosphatase</fullName>
        <ecNumber>3.1.3.2</ecNumber>
    </alternativeName>
</protein>
<feature type="chain" id="PRO_0000331562" description="Low molecular weight phosphotyrosine protein phosphatase">
    <location>
        <begin position="1"/>
        <end position="179"/>
    </location>
</feature>
<feature type="active site" description="Nucleophile" evidence="2">
    <location>
        <position position="15"/>
    </location>
</feature>
<feature type="active site" evidence="2">
    <location>
        <position position="21"/>
    </location>
</feature>
<feature type="active site" description="Proton donor" evidence="2">
    <location>
        <position position="148"/>
    </location>
</feature>
<name>PPAC_DICDI</name>